<accession>P16589</accession>
<organism>
    <name type="scientific">Halocynthia roretzi</name>
    <name type="common">Sea squirt</name>
    <name type="synonym">Cynthia roretzi</name>
    <dbReference type="NCBI Taxonomy" id="7729"/>
    <lineage>
        <taxon>Eukaryota</taxon>
        <taxon>Metazoa</taxon>
        <taxon>Chordata</taxon>
        <taxon>Tunicata</taxon>
        <taxon>Ascidiacea</taxon>
        <taxon>Stolidobranchia</taxon>
        <taxon>Pyuridae</taxon>
        <taxon>Halocynthia</taxon>
    </lineage>
</organism>
<evidence type="ECO:0000255" key="1">
    <source>
        <dbReference type="PROSITE-ProRule" id="PRU00798"/>
    </source>
</evidence>
<evidence type="ECO:0000269" key="2">
    <source>
    </source>
</evidence>
<evidence type="ECO:0007829" key="3">
    <source>
        <dbReference type="PDB" id="1IW4"/>
    </source>
</evidence>
<proteinExistence type="evidence at protein level"/>
<comment type="function">
    <text>Potent inhibitor of trypsin.</text>
</comment>
<comment type="subcellular location">
    <subcellularLocation>
        <location>Secreted</location>
    </subcellularLocation>
</comment>
<feature type="chain" id="PRO_0000073202" description="Trypsin inhibitor">
    <location>
        <begin position="1"/>
        <end position="55"/>
    </location>
</feature>
<feature type="domain" description="Kazal-like" evidence="1">
    <location>
        <begin position="1"/>
        <end position="55"/>
    </location>
</feature>
<feature type="site" description="Reactive bond">
    <location>
        <begin position="16"/>
        <end position="17"/>
    </location>
</feature>
<feature type="disulfide bond" evidence="1 2">
    <location>
        <begin position="5"/>
        <end position="40"/>
    </location>
</feature>
<feature type="disulfide bond" evidence="1 2">
    <location>
        <begin position="12"/>
        <end position="41"/>
    </location>
</feature>
<feature type="disulfide bond" evidence="1 2">
    <location>
        <begin position="14"/>
        <end position="37"/>
    </location>
</feature>
<feature type="disulfide bond" evidence="1 2">
    <location>
        <begin position="23"/>
        <end position="54"/>
    </location>
</feature>
<feature type="strand" evidence="3">
    <location>
        <begin position="8"/>
        <end position="10"/>
    </location>
</feature>
<feature type="strand" evidence="3">
    <location>
        <begin position="22"/>
        <end position="25"/>
    </location>
</feature>
<feature type="strand" evidence="3">
    <location>
        <begin position="31"/>
        <end position="34"/>
    </location>
</feature>
<feature type="helix" evidence="3">
    <location>
        <begin position="36"/>
        <end position="42"/>
    </location>
</feature>
<dbReference type="PDB" id="1IW4">
    <property type="method" value="NMR"/>
    <property type="chains" value="A=1-55"/>
</dbReference>
<dbReference type="PDBsum" id="1IW4"/>
<dbReference type="SMR" id="P16589"/>
<dbReference type="MEROPS" id="I05.001"/>
<dbReference type="EvolutionaryTrace" id="P16589"/>
<dbReference type="GO" id="GO:0005576">
    <property type="term" value="C:extracellular region"/>
    <property type="evidence" value="ECO:0007669"/>
    <property type="project" value="UniProtKB-SubCell"/>
</dbReference>
<dbReference type="GO" id="GO:0004867">
    <property type="term" value="F:serine-type endopeptidase inhibitor activity"/>
    <property type="evidence" value="ECO:0007669"/>
    <property type="project" value="UniProtKB-KW"/>
</dbReference>
<dbReference type="Gene3D" id="3.30.60.30">
    <property type="match status" value="1"/>
</dbReference>
<dbReference type="InterPro" id="IPR002350">
    <property type="entry name" value="Kazal_dom"/>
</dbReference>
<dbReference type="InterPro" id="IPR036058">
    <property type="entry name" value="Kazal_dom_sf"/>
</dbReference>
<dbReference type="SUPFAM" id="SSF100895">
    <property type="entry name" value="Kazal-type serine protease inhibitors"/>
    <property type="match status" value="1"/>
</dbReference>
<dbReference type="PROSITE" id="PS51465">
    <property type="entry name" value="KAZAL_2"/>
    <property type="match status" value="1"/>
</dbReference>
<reference key="1">
    <citation type="journal article" date="1990" name="J. Biochem.">
        <title>Primary structure of ascidian trypsin inhibitors in the hemolymph of a solitary ascidian, Halocynthia roretzi.</title>
        <authorList>
            <person name="Kumazaki T."/>
            <person name="Hoshiba N."/>
            <person name="Yokosawa H."/>
            <person name="Ishii S."/>
        </authorList>
    </citation>
    <scope>PROTEIN SEQUENCE</scope>
    <source>
        <tissue>Hemolymph</tissue>
    </source>
</reference>
<reference key="2">
    <citation type="journal article" date="1990" name="J. Biochem.">
        <title>Disulfide bridge structure of ascidian trypsin inhibitor I: similarity to Kazal-type inhibitors.</title>
        <authorList>
            <person name="Kumazaki T."/>
            <person name="Ishii S."/>
        </authorList>
    </citation>
    <scope>DISULFIDE BONDS</scope>
</reference>
<reference key="3">
    <citation type="journal article" date="2002" name="Biochemistry">
        <title>Solution structure of ascidian trypsin inhibitor determined by nuclear magnetic resonance spectroscopy.</title>
        <authorList>
            <person name="Hemmi H."/>
            <person name="Yoshida T."/>
            <person name="Kumazaki T."/>
            <person name="Nemoto N."/>
            <person name="Hasegawa J."/>
            <person name="Nishioka F."/>
            <person name="Kyogoku Y."/>
            <person name="Yokosawa H."/>
            <person name="Kobayashi Y."/>
        </authorList>
    </citation>
    <scope>STRUCTURE BY NMR</scope>
</reference>
<sequence>AHMDCTEFNPLCRCNKMLGDLICAVIGDAKEEHRNMCALCCEHPGGFEYSNGPCE</sequence>
<name>ITRP_HALRO</name>
<keyword id="KW-0002">3D-structure</keyword>
<keyword id="KW-0903">Direct protein sequencing</keyword>
<keyword id="KW-1015">Disulfide bond</keyword>
<keyword id="KW-0646">Protease inhibitor</keyword>
<keyword id="KW-0964">Secreted</keyword>
<keyword id="KW-0722">Serine protease inhibitor</keyword>
<protein>
    <recommendedName>
        <fullName>Trypsin inhibitor</fullName>
    </recommendedName>
    <alternativeName>
        <fullName>ATI</fullName>
    </alternativeName>
</protein>